<feature type="chain" id="PRO_1000123101" description="Glycerol-3-phosphate acyltransferase">
    <location>
        <begin position="1"/>
        <end position="863"/>
    </location>
</feature>
<feature type="region of interest" description="Disordered" evidence="2">
    <location>
        <begin position="1"/>
        <end position="29"/>
    </location>
</feature>
<feature type="short sequence motif" description="HXXXXD motif">
    <location>
        <begin position="343"/>
        <end position="348"/>
    </location>
</feature>
<feature type="compositionally biased region" description="Polar residues" evidence="2">
    <location>
        <begin position="12"/>
        <end position="29"/>
    </location>
</feature>
<sequence>MPKKNSPLLPKETTTTQSSVDTSGSSNLTWPVSEHTIRRPLWARLLGQILDPWLDLSIEPEHSVQYNDGRPIIYVLEDYGLCNTLILDKACRKTKLPSPLIPLSGNPLQRKRAYLALSRRSSSNSLIPNQRGGKTHSDSLANLLQAHRIRDTLDVHLVPVSIFIGRTPDRQSGWFAVLFSENWALVGRFRRILAILLNGRNTIVCFAPPISVRQTLNEGLPPERTLRKLQRVLRTHFRRIRETVIGPDLSTRRLLVDNVLATEAVREAIGAQAKRDGTDLSETWRKAQAYAWEIAADYSSPVIRSADFLFSHVWNRIYAGVLVHHVDSFKEISPGHEIVYVPSHRSHMDYLLLSYCLYKCSIGLPHIVAGINLNLPVVGTLLRKCGAFFIRRSIKGNMLYSVVLSEYVAQLVAGGYSLEYFIEGGRSRTGRLLQPKGGMIMMTVQAFLRQPRRPVLFQPIYIGYEKLMEGTSYLDELSGEPKKKESIWRVFWNIPKVLKQKYGQVVVNFGEPIALNDVLAELAPEWEGQALNENEKPAWLSSTVNHLARQIQTRINSAADVNPINLLALALLSTPKHAMGEADLIAQITLCKKILLELPYSNRVTITPHTPERIIAHAEQINILTRVHHPLGDVLRVDGDNAVLLSYFRNNVLHLFTASAWVACCFKNNRRMSRIALIRLGVGMYPFLQAELFLPWTEDQFAQHIQQVIELFVREGLLLSAGNEEEDPLTRNTSQTDEVFRLRAISHSLQQAFERYYITISILVKNGPGTLSASELESLCQLAAQRLSLLYASTAPEFFDKGLFRGFIQKLRELNLVWPDTYSKLLFDERLDTSAKDAQVILGRELRHTIERISPEATKPAPK</sequence>
<protein>
    <recommendedName>
        <fullName evidence="1">Glycerol-3-phosphate acyltransferase</fullName>
        <shortName evidence="1">GPAT</shortName>
        <ecNumber evidence="1">2.3.1.15</ecNumber>
    </recommendedName>
</protein>
<proteinExistence type="inferred from homology"/>
<keyword id="KW-0012">Acyltransferase</keyword>
<keyword id="KW-0997">Cell inner membrane</keyword>
<keyword id="KW-1003">Cell membrane</keyword>
<keyword id="KW-0444">Lipid biosynthesis</keyword>
<keyword id="KW-0443">Lipid metabolism</keyword>
<keyword id="KW-0472">Membrane</keyword>
<keyword id="KW-0594">Phospholipid biosynthesis</keyword>
<keyword id="KW-1208">Phospholipid metabolism</keyword>
<keyword id="KW-0808">Transferase</keyword>
<reference key="1">
    <citation type="journal article" date="2010" name="J. Bacteriol.">
        <title>Whole genome sequences of two Xylella fastidiosa strains (M12 and M23) causing almond leaf scorch disease in California.</title>
        <authorList>
            <person name="Chen J."/>
            <person name="Xie G."/>
            <person name="Han S."/>
            <person name="Chertkov O."/>
            <person name="Sims D."/>
            <person name="Civerolo E.L."/>
        </authorList>
    </citation>
    <scope>NUCLEOTIDE SEQUENCE [LARGE SCALE GENOMIC DNA]</scope>
    <source>
        <strain>M23</strain>
    </source>
</reference>
<comment type="catalytic activity">
    <reaction evidence="1">
        <text>sn-glycerol 3-phosphate + an acyl-CoA = a 1-acyl-sn-glycero-3-phosphate + CoA</text>
        <dbReference type="Rhea" id="RHEA:15325"/>
        <dbReference type="ChEBI" id="CHEBI:57287"/>
        <dbReference type="ChEBI" id="CHEBI:57597"/>
        <dbReference type="ChEBI" id="CHEBI:57970"/>
        <dbReference type="ChEBI" id="CHEBI:58342"/>
        <dbReference type="EC" id="2.3.1.15"/>
    </reaction>
</comment>
<comment type="pathway">
    <text evidence="1">Phospholipid metabolism; CDP-diacylglycerol biosynthesis; CDP-diacylglycerol from sn-glycerol 3-phosphate: step 1/3.</text>
</comment>
<comment type="subcellular location">
    <subcellularLocation>
        <location evidence="1">Cell inner membrane</location>
        <topology evidence="1">Peripheral membrane protein</topology>
        <orientation evidence="1">Cytoplasmic side</orientation>
    </subcellularLocation>
</comment>
<comment type="domain">
    <text evidence="1">The HXXXXD motif is essential for acyltransferase activity and may constitute the binding site for the phosphate moiety of the glycerol-3-phosphate.</text>
</comment>
<comment type="similarity">
    <text evidence="1">Belongs to the GPAT/DAPAT family.</text>
</comment>
<evidence type="ECO:0000255" key="1">
    <source>
        <dbReference type="HAMAP-Rule" id="MF_00393"/>
    </source>
</evidence>
<evidence type="ECO:0000256" key="2">
    <source>
        <dbReference type="SAM" id="MobiDB-lite"/>
    </source>
</evidence>
<gene>
    <name evidence="1" type="primary">plsB</name>
    <name type="ordered locus">XfasM23_0310</name>
</gene>
<accession>B2I7N1</accession>
<organism>
    <name type="scientific">Xylella fastidiosa (strain M23)</name>
    <dbReference type="NCBI Taxonomy" id="405441"/>
    <lineage>
        <taxon>Bacteria</taxon>
        <taxon>Pseudomonadati</taxon>
        <taxon>Pseudomonadota</taxon>
        <taxon>Gammaproteobacteria</taxon>
        <taxon>Lysobacterales</taxon>
        <taxon>Lysobacteraceae</taxon>
        <taxon>Xylella</taxon>
    </lineage>
</organism>
<name>PLSB_XYLF2</name>
<dbReference type="EC" id="2.3.1.15" evidence="1"/>
<dbReference type="EMBL" id="CP001011">
    <property type="protein sequence ID" value="ACB91759.1"/>
    <property type="molecule type" value="Genomic_DNA"/>
</dbReference>
<dbReference type="SMR" id="B2I7N1"/>
<dbReference type="KEGG" id="xfn:XfasM23_0310"/>
<dbReference type="HOGENOM" id="CLU_015407_0_0_6"/>
<dbReference type="UniPathway" id="UPA00557">
    <property type="reaction ID" value="UER00612"/>
</dbReference>
<dbReference type="Proteomes" id="UP000001698">
    <property type="component" value="Chromosome"/>
</dbReference>
<dbReference type="GO" id="GO:0005886">
    <property type="term" value="C:plasma membrane"/>
    <property type="evidence" value="ECO:0007669"/>
    <property type="project" value="UniProtKB-SubCell"/>
</dbReference>
<dbReference type="GO" id="GO:0004366">
    <property type="term" value="F:glycerol-3-phosphate O-acyltransferase activity"/>
    <property type="evidence" value="ECO:0007669"/>
    <property type="project" value="UniProtKB-UniRule"/>
</dbReference>
<dbReference type="GO" id="GO:0016024">
    <property type="term" value="P:CDP-diacylglycerol biosynthetic process"/>
    <property type="evidence" value="ECO:0007669"/>
    <property type="project" value="UniProtKB-UniRule"/>
</dbReference>
<dbReference type="GO" id="GO:0006631">
    <property type="term" value="P:fatty acid metabolic process"/>
    <property type="evidence" value="ECO:0007669"/>
    <property type="project" value="TreeGrafter"/>
</dbReference>
<dbReference type="CDD" id="cd07993">
    <property type="entry name" value="LPLAT_DHAPAT-like"/>
    <property type="match status" value="1"/>
</dbReference>
<dbReference type="HAMAP" id="MF_00393">
    <property type="entry name" value="Glyc3P_acyltrans"/>
    <property type="match status" value="1"/>
</dbReference>
<dbReference type="InterPro" id="IPR022284">
    <property type="entry name" value="GPAT/DHAPAT"/>
</dbReference>
<dbReference type="InterPro" id="IPR045520">
    <property type="entry name" value="GPAT/DHAPAT_C"/>
</dbReference>
<dbReference type="InterPro" id="IPR041728">
    <property type="entry name" value="GPAT/DHAPAT_LPLAT"/>
</dbReference>
<dbReference type="InterPro" id="IPR028354">
    <property type="entry name" value="GPAT_PlsB"/>
</dbReference>
<dbReference type="InterPro" id="IPR002123">
    <property type="entry name" value="Plipid/glycerol_acylTrfase"/>
</dbReference>
<dbReference type="NCBIfam" id="TIGR03703">
    <property type="entry name" value="plsB"/>
    <property type="match status" value="1"/>
</dbReference>
<dbReference type="NCBIfam" id="NF003441">
    <property type="entry name" value="PRK04974.1"/>
    <property type="match status" value="1"/>
</dbReference>
<dbReference type="PANTHER" id="PTHR12563:SF17">
    <property type="entry name" value="DIHYDROXYACETONE PHOSPHATE ACYLTRANSFERASE"/>
    <property type="match status" value="1"/>
</dbReference>
<dbReference type="PANTHER" id="PTHR12563">
    <property type="entry name" value="GLYCEROL-3-PHOSPHATE ACYLTRANSFERASE"/>
    <property type="match status" value="1"/>
</dbReference>
<dbReference type="Pfam" id="PF01553">
    <property type="entry name" value="Acyltransferase"/>
    <property type="match status" value="1"/>
</dbReference>
<dbReference type="Pfam" id="PF19277">
    <property type="entry name" value="GPAT_C"/>
    <property type="match status" value="1"/>
</dbReference>
<dbReference type="PIRSF" id="PIRSF500064">
    <property type="entry name" value="GPAT"/>
    <property type="match status" value="1"/>
</dbReference>
<dbReference type="PIRSF" id="PIRSF000437">
    <property type="entry name" value="GPAT_DHAPAT"/>
    <property type="match status" value="1"/>
</dbReference>
<dbReference type="SMART" id="SM00563">
    <property type="entry name" value="PlsC"/>
    <property type="match status" value="1"/>
</dbReference>
<dbReference type="SUPFAM" id="SSF69593">
    <property type="entry name" value="Glycerol-3-phosphate (1)-acyltransferase"/>
    <property type="match status" value="1"/>
</dbReference>